<keyword id="KW-0963">Cytoplasm</keyword>
<keyword id="KW-0251">Elongation factor</keyword>
<keyword id="KW-0342">GTP-binding</keyword>
<keyword id="KW-0547">Nucleotide-binding</keyword>
<keyword id="KW-0648">Protein biosynthesis</keyword>
<reference key="1">
    <citation type="journal article" date="2005" name="J. Bacteriol.">
        <title>Whole-genome sequence analysis of Pseudomonas syringae pv. phaseolicola 1448A reveals divergence among pathovars in genes involved in virulence and transposition.</title>
        <authorList>
            <person name="Joardar V."/>
            <person name="Lindeberg M."/>
            <person name="Jackson R.W."/>
            <person name="Selengut J."/>
            <person name="Dodson R."/>
            <person name="Brinkac L.M."/>
            <person name="Daugherty S.C."/>
            <person name="DeBoy R.T."/>
            <person name="Durkin A.S."/>
            <person name="Gwinn Giglio M."/>
            <person name="Madupu R."/>
            <person name="Nelson W.C."/>
            <person name="Rosovitz M.J."/>
            <person name="Sullivan S.A."/>
            <person name="Crabtree J."/>
            <person name="Creasy T."/>
            <person name="Davidsen T.M."/>
            <person name="Haft D.H."/>
            <person name="Zafar N."/>
            <person name="Zhou L."/>
            <person name="Halpin R."/>
            <person name="Holley T."/>
            <person name="Khouri H.M."/>
            <person name="Feldblyum T.V."/>
            <person name="White O."/>
            <person name="Fraser C.M."/>
            <person name="Chatterjee A.K."/>
            <person name="Cartinhour S."/>
            <person name="Schneider D."/>
            <person name="Mansfield J.W."/>
            <person name="Collmer A."/>
            <person name="Buell R."/>
        </authorList>
    </citation>
    <scope>NUCLEOTIDE SEQUENCE [LARGE SCALE GENOMIC DNA]</scope>
    <source>
        <strain>1448A / Race 6</strain>
    </source>
</reference>
<comment type="function">
    <text evidence="1">Catalyzes the GTP-dependent ribosomal translocation step during translation elongation. During this step, the ribosome changes from the pre-translocational (PRE) to the post-translocational (POST) state as the newly formed A-site-bound peptidyl-tRNA and P-site-bound deacylated tRNA move to the P and E sites, respectively. Catalyzes the coordinated movement of the two tRNA molecules, the mRNA and conformational changes in the ribosome.</text>
</comment>
<comment type="subcellular location">
    <subcellularLocation>
        <location evidence="1">Cytoplasm</location>
    </subcellularLocation>
</comment>
<comment type="similarity">
    <text evidence="1">Belongs to the TRAFAC class translation factor GTPase superfamily. Classic translation factor GTPase family. EF-G/EF-2 subfamily.</text>
</comment>
<protein>
    <recommendedName>
        <fullName evidence="1">Elongation factor G</fullName>
        <shortName evidence="1">EF-G</shortName>
    </recommendedName>
</protein>
<organism>
    <name type="scientific">Pseudomonas savastanoi pv. phaseolicola (strain 1448A / Race 6)</name>
    <name type="common">Pseudomonas syringae pv. phaseolicola (strain 1448A / Race 6)</name>
    <dbReference type="NCBI Taxonomy" id="264730"/>
    <lineage>
        <taxon>Bacteria</taxon>
        <taxon>Pseudomonadati</taxon>
        <taxon>Pseudomonadota</taxon>
        <taxon>Gammaproteobacteria</taxon>
        <taxon>Pseudomonadales</taxon>
        <taxon>Pseudomonadaceae</taxon>
        <taxon>Pseudomonas</taxon>
    </lineage>
</organism>
<proteinExistence type="inferred from homology"/>
<feature type="chain" id="PRO_0000225231" description="Elongation factor G">
    <location>
        <begin position="1"/>
        <end position="701"/>
    </location>
</feature>
<feature type="domain" description="tr-type G">
    <location>
        <begin position="8"/>
        <end position="291"/>
    </location>
</feature>
<feature type="binding site" evidence="1">
    <location>
        <begin position="17"/>
        <end position="24"/>
    </location>
    <ligand>
        <name>GTP</name>
        <dbReference type="ChEBI" id="CHEBI:37565"/>
    </ligand>
</feature>
<feature type="binding site" evidence="1">
    <location>
        <begin position="89"/>
        <end position="93"/>
    </location>
    <ligand>
        <name>GTP</name>
        <dbReference type="ChEBI" id="CHEBI:37565"/>
    </ligand>
</feature>
<feature type="binding site" evidence="1">
    <location>
        <begin position="143"/>
        <end position="146"/>
    </location>
    <ligand>
        <name>GTP</name>
        <dbReference type="ChEBI" id="CHEBI:37565"/>
    </ligand>
</feature>
<name>EFG_PSE14</name>
<evidence type="ECO:0000255" key="1">
    <source>
        <dbReference type="HAMAP-Rule" id="MF_00054"/>
    </source>
</evidence>
<sequence length="701" mass="77229">MARTTPIGRYRNIGIVAHVDAGKTTTTERVLFYTGKSHKMGEVHDGAATTDWMVQEQERGITITSAAITAFWQGSEKQHKDQYRFNVIDTPGHVDFTIEVERSLRVLDGAVVVFCGTSGVEPQSETVWRQANKYGVPRIVYVNKMDRAGANFLRVIAQIKQRLGHTPVPIQLAIGAEDNFQGQIDLMSMEAVYWNDADKGMVPRREPIPAELQELADEWRSNMVEAAAEASEELMNKYLEGEELTNEEIKAALRQRTIAGEIVLAVCGSSFKNKGVPLVLDAVIDYLPAPTDIPAIKGSDPDNEEVLMERHADDNEPFSALAFKIATDPFVGTLTFVRVYSGVLASGDGVINSVKGKKERVGRMVQMHANAREEIKEVRAGDIAALIGMKDVTTGETLCNADKPIILVRMDFPEPVISVAVEPKTKDDQEKMGIALGKLAQEDPSFRVKTDEETGQTIISGMGELHLDILVDRMRREFNVEANIGKPQVSYRERITKNCEIEGKFVRQSGGRGQFGHCWIRFAPADEGQEGLQFVNEVVGGVVPKEYIPAIQKGIEEQMKNGVVAGYPLIGLKATVFDGSYHDVDSNEMAFKVAASMATKQLAQKGGGELLEPIMAVEVVTPEDYMGDVMGDLNRRRGMILGMEDTVSGKVIRAEVPLGEMFGYATDVRSMSQGRASYSMEFKKYNTAPSHIVETVTKKQG</sequence>
<dbReference type="EMBL" id="CP000058">
    <property type="protein sequence ID" value="AAZ35585.1"/>
    <property type="molecule type" value="Genomic_DNA"/>
</dbReference>
<dbReference type="RefSeq" id="WP_004666356.1">
    <property type="nucleotide sequence ID" value="NC_005773.3"/>
</dbReference>
<dbReference type="SMR" id="Q48D33"/>
<dbReference type="GeneID" id="96221033"/>
<dbReference type="KEGG" id="psp:PSPPH_4595"/>
<dbReference type="eggNOG" id="COG0480">
    <property type="taxonomic scope" value="Bacteria"/>
</dbReference>
<dbReference type="HOGENOM" id="CLU_002794_4_1_6"/>
<dbReference type="Proteomes" id="UP000000551">
    <property type="component" value="Chromosome"/>
</dbReference>
<dbReference type="GO" id="GO:0005737">
    <property type="term" value="C:cytoplasm"/>
    <property type="evidence" value="ECO:0007669"/>
    <property type="project" value="UniProtKB-SubCell"/>
</dbReference>
<dbReference type="GO" id="GO:0005525">
    <property type="term" value="F:GTP binding"/>
    <property type="evidence" value="ECO:0007669"/>
    <property type="project" value="UniProtKB-UniRule"/>
</dbReference>
<dbReference type="GO" id="GO:0003924">
    <property type="term" value="F:GTPase activity"/>
    <property type="evidence" value="ECO:0007669"/>
    <property type="project" value="InterPro"/>
</dbReference>
<dbReference type="GO" id="GO:0097216">
    <property type="term" value="F:guanosine tetraphosphate binding"/>
    <property type="evidence" value="ECO:0007669"/>
    <property type="project" value="UniProtKB-ARBA"/>
</dbReference>
<dbReference type="GO" id="GO:0003746">
    <property type="term" value="F:translation elongation factor activity"/>
    <property type="evidence" value="ECO:0007669"/>
    <property type="project" value="UniProtKB-UniRule"/>
</dbReference>
<dbReference type="GO" id="GO:0032790">
    <property type="term" value="P:ribosome disassembly"/>
    <property type="evidence" value="ECO:0007669"/>
    <property type="project" value="TreeGrafter"/>
</dbReference>
<dbReference type="CDD" id="cd01886">
    <property type="entry name" value="EF-G"/>
    <property type="match status" value="1"/>
</dbReference>
<dbReference type="CDD" id="cd16262">
    <property type="entry name" value="EFG_III"/>
    <property type="match status" value="1"/>
</dbReference>
<dbReference type="CDD" id="cd01434">
    <property type="entry name" value="EFG_mtEFG1_IV"/>
    <property type="match status" value="1"/>
</dbReference>
<dbReference type="CDD" id="cd03713">
    <property type="entry name" value="EFG_mtEFG_C"/>
    <property type="match status" value="1"/>
</dbReference>
<dbReference type="CDD" id="cd04088">
    <property type="entry name" value="EFG_mtEFG_II"/>
    <property type="match status" value="1"/>
</dbReference>
<dbReference type="FunFam" id="2.40.30.10:FF:000006">
    <property type="entry name" value="Elongation factor G"/>
    <property type="match status" value="1"/>
</dbReference>
<dbReference type="FunFam" id="3.30.230.10:FF:000003">
    <property type="entry name" value="Elongation factor G"/>
    <property type="match status" value="1"/>
</dbReference>
<dbReference type="FunFam" id="3.30.70.240:FF:000001">
    <property type="entry name" value="Elongation factor G"/>
    <property type="match status" value="1"/>
</dbReference>
<dbReference type="FunFam" id="3.30.70.870:FF:000001">
    <property type="entry name" value="Elongation factor G"/>
    <property type="match status" value="1"/>
</dbReference>
<dbReference type="FunFam" id="3.40.50.300:FF:000029">
    <property type="entry name" value="Elongation factor G"/>
    <property type="match status" value="1"/>
</dbReference>
<dbReference type="Gene3D" id="3.30.230.10">
    <property type="match status" value="1"/>
</dbReference>
<dbReference type="Gene3D" id="3.30.70.240">
    <property type="match status" value="1"/>
</dbReference>
<dbReference type="Gene3D" id="3.30.70.870">
    <property type="entry name" value="Elongation Factor G (Translational Gtpase), domain 3"/>
    <property type="match status" value="1"/>
</dbReference>
<dbReference type="Gene3D" id="3.40.50.300">
    <property type="entry name" value="P-loop containing nucleotide triphosphate hydrolases"/>
    <property type="match status" value="1"/>
</dbReference>
<dbReference type="Gene3D" id="2.40.30.10">
    <property type="entry name" value="Translation factors"/>
    <property type="match status" value="1"/>
</dbReference>
<dbReference type="HAMAP" id="MF_00054_B">
    <property type="entry name" value="EF_G_EF_2_B"/>
    <property type="match status" value="1"/>
</dbReference>
<dbReference type="InterPro" id="IPR041095">
    <property type="entry name" value="EFG_II"/>
</dbReference>
<dbReference type="InterPro" id="IPR009022">
    <property type="entry name" value="EFG_III"/>
</dbReference>
<dbReference type="InterPro" id="IPR035647">
    <property type="entry name" value="EFG_III/V"/>
</dbReference>
<dbReference type="InterPro" id="IPR047872">
    <property type="entry name" value="EFG_IV"/>
</dbReference>
<dbReference type="InterPro" id="IPR035649">
    <property type="entry name" value="EFG_V"/>
</dbReference>
<dbReference type="InterPro" id="IPR000640">
    <property type="entry name" value="EFG_V-like"/>
</dbReference>
<dbReference type="InterPro" id="IPR004161">
    <property type="entry name" value="EFTu-like_2"/>
</dbReference>
<dbReference type="InterPro" id="IPR031157">
    <property type="entry name" value="G_TR_CS"/>
</dbReference>
<dbReference type="InterPro" id="IPR027417">
    <property type="entry name" value="P-loop_NTPase"/>
</dbReference>
<dbReference type="InterPro" id="IPR020568">
    <property type="entry name" value="Ribosomal_Su5_D2-typ_SF"/>
</dbReference>
<dbReference type="InterPro" id="IPR014721">
    <property type="entry name" value="Ribsml_uS5_D2-typ_fold_subgr"/>
</dbReference>
<dbReference type="InterPro" id="IPR005225">
    <property type="entry name" value="Small_GTP-bd"/>
</dbReference>
<dbReference type="InterPro" id="IPR000795">
    <property type="entry name" value="T_Tr_GTP-bd_dom"/>
</dbReference>
<dbReference type="InterPro" id="IPR009000">
    <property type="entry name" value="Transl_B-barrel_sf"/>
</dbReference>
<dbReference type="InterPro" id="IPR004540">
    <property type="entry name" value="Transl_elong_EFG/EF2"/>
</dbReference>
<dbReference type="InterPro" id="IPR005517">
    <property type="entry name" value="Transl_elong_EFG/EF2_IV"/>
</dbReference>
<dbReference type="NCBIfam" id="TIGR00484">
    <property type="entry name" value="EF-G"/>
    <property type="match status" value="1"/>
</dbReference>
<dbReference type="NCBIfam" id="NF009381">
    <property type="entry name" value="PRK12740.1-5"/>
    <property type="match status" value="1"/>
</dbReference>
<dbReference type="NCBIfam" id="TIGR00231">
    <property type="entry name" value="small_GTP"/>
    <property type="match status" value="1"/>
</dbReference>
<dbReference type="PANTHER" id="PTHR43261:SF1">
    <property type="entry name" value="RIBOSOME-RELEASING FACTOR 2, MITOCHONDRIAL"/>
    <property type="match status" value="1"/>
</dbReference>
<dbReference type="PANTHER" id="PTHR43261">
    <property type="entry name" value="TRANSLATION ELONGATION FACTOR G-RELATED"/>
    <property type="match status" value="1"/>
</dbReference>
<dbReference type="Pfam" id="PF00679">
    <property type="entry name" value="EFG_C"/>
    <property type="match status" value="1"/>
</dbReference>
<dbReference type="Pfam" id="PF14492">
    <property type="entry name" value="EFG_III"/>
    <property type="match status" value="1"/>
</dbReference>
<dbReference type="Pfam" id="PF03764">
    <property type="entry name" value="EFG_IV"/>
    <property type="match status" value="1"/>
</dbReference>
<dbReference type="Pfam" id="PF00009">
    <property type="entry name" value="GTP_EFTU"/>
    <property type="match status" value="1"/>
</dbReference>
<dbReference type="Pfam" id="PF03144">
    <property type="entry name" value="GTP_EFTU_D2"/>
    <property type="match status" value="1"/>
</dbReference>
<dbReference type="PRINTS" id="PR00315">
    <property type="entry name" value="ELONGATNFCT"/>
</dbReference>
<dbReference type="SMART" id="SM00838">
    <property type="entry name" value="EFG_C"/>
    <property type="match status" value="1"/>
</dbReference>
<dbReference type="SMART" id="SM00889">
    <property type="entry name" value="EFG_IV"/>
    <property type="match status" value="1"/>
</dbReference>
<dbReference type="SUPFAM" id="SSF54980">
    <property type="entry name" value="EF-G C-terminal domain-like"/>
    <property type="match status" value="2"/>
</dbReference>
<dbReference type="SUPFAM" id="SSF52540">
    <property type="entry name" value="P-loop containing nucleoside triphosphate hydrolases"/>
    <property type="match status" value="1"/>
</dbReference>
<dbReference type="SUPFAM" id="SSF54211">
    <property type="entry name" value="Ribosomal protein S5 domain 2-like"/>
    <property type="match status" value="1"/>
</dbReference>
<dbReference type="SUPFAM" id="SSF50447">
    <property type="entry name" value="Translation proteins"/>
    <property type="match status" value="1"/>
</dbReference>
<dbReference type="PROSITE" id="PS00301">
    <property type="entry name" value="G_TR_1"/>
    <property type="match status" value="1"/>
</dbReference>
<dbReference type="PROSITE" id="PS51722">
    <property type="entry name" value="G_TR_2"/>
    <property type="match status" value="1"/>
</dbReference>
<gene>
    <name evidence="1" type="primary">fusA</name>
    <name type="ordered locus">PSPPH_4595</name>
</gene>
<accession>Q48D33</accession>